<protein>
    <recommendedName>
        <fullName evidence="2">Large ribosomal subunit protein bL19</fullName>
    </recommendedName>
    <alternativeName>
        <fullName>50S ribosomal protein L19</fullName>
    </alternativeName>
</protein>
<evidence type="ECO:0000250" key="1"/>
<evidence type="ECO:0000305" key="2"/>
<evidence type="ECO:0007829" key="3">
    <source>
        <dbReference type="PDB" id="8P8B"/>
    </source>
</evidence>
<keyword id="KW-0002">3D-structure</keyword>
<keyword id="KW-1185">Reference proteome</keyword>
<keyword id="KW-0687">Ribonucleoprotein</keyword>
<keyword id="KW-0689">Ribosomal protein</keyword>
<comment type="function">
    <text evidence="1">This protein is located at the 30S-50S ribosomal subunit interface and may play a role in the structure and function of the aminoacyl-tRNA binding site.</text>
</comment>
<comment type="similarity">
    <text evidence="2">Belongs to the bacterial ribosomal protein bL19 family.</text>
</comment>
<name>RL19_MYCPN</name>
<sequence>MKKINKQALIDLVEQKQLKAYVPEFSAGDEVNVAIKLKEKEKVRIQNFTGTVLRRRGKGISETFIVRKTTDGIPIEKNFQIHNPNISIELKRRGKVRRAYISYMRERSGKAAKIKERKQ</sequence>
<gene>
    <name type="primary">rplS</name>
    <name type="ordered locus">MPN_658</name>
    <name type="ORF">MP184</name>
</gene>
<feature type="chain" id="PRO_0000163492" description="Large ribosomal subunit protein bL19">
    <location>
        <begin position="1"/>
        <end position="119"/>
    </location>
</feature>
<feature type="helix" evidence="3">
    <location>
        <begin position="6"/>
        <end position="15"/>
    </location>
</feature>
<feature type="strand" evidence="3">
    <location>
        <begin position="27"/>
        <end position="38"/>
    </location>
</feature>
<feature type="strand" evidence="3">
    <location>
        <begin position="40"/>
        <end position="47"/>
    </location>
</feature>
<feature type="strand" evidence="3">
    <location>
        <begin position="50"/>
        <end position="56"/>
    </location>
</feature>
<feature type="strand" evidence="3">
    <location>
        <begin position="63"/>
        <end position="70"/>
    </location>
</feature>
<feature type="strand" evidence="3">
    <location>
        <begin position="73"/>
        <end position="80"/>
    </location>
</feature>
<feature type="strand" evidence="3">
    <location>
        <begin position="86"/>
        <end position="94"/>
    </location>
</feature>
<feature type="strand" evidence="3">
    <location>
        <begin position="97"/>
        <end position="100"/>
    </location>
</feature>
<feature type="helix" evidence="3">
    <location>
        <begin position="102"/>
        <end position="105"/>
    </location>
</feature>
<feature type="helix" evidence="3">
    <location>
        <begin position="109"/>
        <end position="112"/>
    </location>
</feature>
<organism>
    <name type="scientific">Mycoplasma pneumoniae (strain ATCC 29342 / M129 / Subtype 1)</name>
    <name type="common">Mycoplasmoides pneumoniae</name>
    <dbReference type="NCBI Taxonomy" id="272634"/>
    <lineage>
        <taxon>Bacteria</taxon>
        <taxon>Bacillati</taxon>
        <taxon>Mycoplasmatota</taxon>
        <taxon>Mycoplasmoidales</taxon>
        <taxon>Mycoplasmoidaceae</taxon>
        <taxon>Mycoplasmoides</taxon>
    </lineage>
</organism>
<dbReference type="EMBL" id="U00089">
    <property type="protein sequence ID" value="AAB95832.1"/>
    <property type="molecule type" value="Genomic_DNA"/>
</dbReference>
<dbReference type="PIR" id="S73510">
    <property type="entry name" value="S73510"/>
</dbReference>
<dbReference type="RefSeq" id="NP_110347.1">
    <property type="nucleotide sequence ID" value="NC_000912.1"/>
</dbReference>
<dbReference type="RefSeq" id="WP_010875015.1">
    <property type="nucleotide sequence ID" value="NZ_OU342337.1"/>
</dbReference>
<dbReference type="PDB" id="7OOD">
    <property type="method" value="EM"/>
    <property type="resolution" value="3.40 A"/>
    <property type="chains" value="o=1-119"/>
</dbReference>
<dbReference type="PDB" id="7P6Z">
    <property type="method" value="EM"/>
    <property type="resolution" value="3.50 A"/>
    <property type="chains" value="o=1-119"/>
</dbReference>
<dbReference type="PDB" id="7PAH">
    <property type="method" value="EM"/>
    <property type="resolution" value="9.50 A"/>
    <property type="chains" value="o=1-119"/>
</dbReference>
<dbReference type="PDB" id="7PAI">
    <property type="method" value="EM"/>
    <property type="resolution" value="6.70 A"/>
    <property type="chains" value="o=1-119"/>
</dbReference>
<dbReference type="PDB" id="7PAJ">
    <property type="method" value="EM"/>
    <property type="resolution" value="7.30 A"/>
    <property type="chains" value="o=1-119"/>
</dbReference>
<dbReference type="PDB" id="7PAK">
    <property type="method" value="EM"/>
    <property type="resolution" value="5.30 A"/>
    <property type="chains" value="o=1-119"/>
</dbReference>
<dbReference type="PDB" id="7PAL">
    <property type="method" value="EM"/>
    <property type="resolution" value="4.70 A"/>
    <property type="chains" value="o=1-119"/>
</dbReference>
<dbReference type="PDB" id="7PAM">
    <property type="method" value="EM"/>
    <property type="resolution" value="6.80 A"/>
    <property type="chains" value="o=1-119"/>
</dbReference>
<dbReference type="PDB" id="7PAN">
    <property type="method" value="EM"/>
    <property type="resolution" value="9.70 A"/>
    <property type="chains" value="o=1-119"/>
</dbReference>
<dbReference type="PDB" id="7PAO">
    <property type="method" value="EM"/>
    <property type="resolution" value="7.00 A"/>
    <property type="chains" value="o=1-119"/>
</dbReference>
<dbReference type="PDB" id="7PAQ">
    <property type="method" value="EM"/>
    <property type="resolution" value="8.90 A"/>
    <property type="chains" value="o=1-119"/>
</dbReference>
<dbReference type="PDB" id="7PAR">
    <property type="method" value="EM"/>
    <property type="resolution" value="8.20 A"/>
    <property type="chains" value="o=1-119"/>
</dbReference>
<dbReference type="PDB" id="7PAS">
    <property type="method" value="EM"/>
    <property type="resolution" value="16.00 A"/>
    <property type="chains" value="o=1-119"/>
</dbReference>
<dbReference type="PDB" id="7PAT">
    <property type="method" value="EM"/>
    <property type="resolution" value="9.20 A"/>
    <property type="chains" value="o=1-119"/>
</dbReference>
<dbReference type="PDB" id="7PAU">
    <property type="method" value="EM"/>
    <property type="resolution" value="8.30 A"/>
    <property type="chains" value="o=1-119"/>
</dbReference>
<dbReference type="PDB" id="7PH9">
    <property type="method" value="EM"/>
    <property type="resolution" value="8.70 A"/>
    <property type="chains" value="o=1-119"/>
</dbReference>
<dbReference type="PDB" id="7PHA">
    <property type="method" value="EM"/>
    <property type="resolution" value="8.50 A"/>
    <property type="chains" value="o=1-119"/>
</dbReference>
<dbReference type="PDB" id="7PHB">
    <property type="method" value="EM"/>
    <property type="resolution" value="4.90 A"/>
    <property type="chains" value="o=1-119"/>
</dbReference>
<dbReference type="PDB" id="7PHC">
    <property type="method" value="EM"/>
    <property type="resolution" value="9.90 A"/>
    <property type="chains" value="o=1-119"/>
</dbReference>
<dbReference type="PDB" id="7PI8">
    <property type="method" value="EM"/>
    <property type="resolution" value="8.90 A"/>
    <property type="chains" value="o=1-119"/>
</dbReference>
<dbReference type="PDB" id="7PI9">
    <property type="method" value="EM"/>
    <property type="resolution" value="6.30 A"/>
    <property type="chains" value="o=1-119"/>
</dbReference>
<dbReference type="PDB" id="7PIA">
    <property type="method" value="EM"/>
    <property type="resolution" value="13.60 A"/>
    <property type="chains" value="o=1-119"/>
</dbReference>
<dbReference type="PDB" id="7PIB">
    <property type="method" value="EM"/>
    <property type="resolution" value="4.70 A"/>
    <property type="chains" value="o=1-119"/>
</dbReference>
<dbReference type="PDB" id="7PIC">
    <property type="method" value="EM"/>
    <property type="resolution" value="9.10 A"/>
    <property type="chains" value="o=1-119"/>
</dbReference>
<dbReference type="PDB" id="7PIO">
    <property type="method" value="EM"/>
    <property type="resolution" value="9.50 A"/>
    <property type="chains" value="o=1-119"/>
</dbReference>
<dbReference type="PDB" id="7PIP">
    <property type="method" value="EM"/>
    <property type="resolution" value="9.30 A"/>
    <property type="chains" value="o=1-119"/>
</dbReference>
<dbReference type="PDB" id="7PIQ">
    <property type="method" value="EM"/>
    <property type="resolution" value="9.70 A"/>
    <property type="chains" value="o=1-119"/>
</dbReference>
<dbReference type="PDB" id="7PIR">
    <property type="method" value="EM"/>
    <property type="resolution" value="12.10 A"/>
    <property type="chains" value="o=1-119"/>
</dbReference>
<dbReference type="PDB" id="7PIS">
    <property type="method" value="EM"/>
    <property type="resolution" value="15.00 A"/>
    <property type="chains" value="o=1-119"/>
</dbReference>
<dbReference type="PDB" id="7PIT">
    <property type="method" value="EM"/>
    <property type="resolution" value="5.70 A"/>
    <property type="chains" value="o=1-119"/>
</dbReference>
<dbReference type="PDB" id="8P7X">
    <property type="method" value="EM"/>
    <property type="resolution" value="3.03 A"/>
    <property type="chains" value="o=1-119"/>
</dbReference>
<dbReference type="PDB" id="8P7Y">
    <property type="method" value="EM"/>
    <property type="resolution" value="3.70 A"/>
    <property type="chains" value="o=1-119"/>
</dbReference>
<dbReference type="PDB" id="8P8B">
    <property type="method" value="EM"/>
    <property type="resolution" value="2.90 A"/>
    <property type="chains" value="o=1-119"/>
</dbReference>
<dbReference type="PDB" id="8P8V">
    <property type="method" value="EM"/>
    <property type="resolution" value="8.70 A"/>
    <property type="chains" value="o=1-119"/>
</dbReference>
<dbReference type="PDB" id="8P8W">
    <property type="method" value="EM"/>
    <property type="resolution" value="8.70 A"/>
    <property type="chains" value="o=1-119"/>
</dbReference>
<dbReference type="PDBsum" id="7OOD"/>
<dbReference type="PDBsum" id="7P6Z"/>
<dbReference type="PDBsum" id="7PAH"/>
<dbReference type="PDBsum" id="7PAI"/>
<dbReference type="PDBsum" id="7PAJ"/>
<dbReference type="PDBsum" id="7PAK"/>
<dbReference type="PDBsum" id="7PAL"/>
<dbReference type="PDBsum" id="7PAM"/>
<dbReference type="PDBsum" id="7PAN"/>
<dbReference type="PDBsum" id="7PAO"/>
<dbReference type="PDBsum" id="7PAQ"/>
<dbReference type="PDBsum" id="7PAR"/>
<dbReference type="PDBsum" id="7PAS"/>
<dbReference type="PDBsum" id="7PAT"/>
<dbReference type="PDBsum" id="7PAU"/>
<dbReference type="PDBsum" id="7PH9"/>
<dbReference type="PDBsum" id="7PHA"/>
<dbReference type="PDBsum" id="7PHB"/>
<dbReference type="PDBsum" id="7PHC"/>
<dbReference type="PDBsum" id="7PI8"/>
<dbReference type="PDBsum" id="7PI9"/>
<dbReference type="PDBsum" id="7PIA"/>
<dbReference type="PDBsum" id="7PIB"/>
<dbReference type="PDBsum" id="7PIC"/>
<dbReference type="PDBsum" id="7PIO"/>
<dbReference type="PDBsum" id="7PIP"/>
<dbReference type="PDBsum" id="7PIQ"/>
<dbReference type="PDBsum" id="7PIR"/>
<dbReference type="PDBsum" id="7PIS"/>
<dbReference type="PDBsum" id="7PIT"/>
<dbReference type="PDBsum" id="8P7X"/>
<dbReference type="PDBsum" id="8P7Y"/>
<dbReference type="PDBsum" id="8P8B"/>
<dbReference type="PDBsum" id="8P8V"/>
<dbReference type="PDBsum" id="8P8W"/>
<dbReference type="EMDB" id="EMD-13234"/>
<dbReference type="EMDB" id="EMD-13272"/>
<dbReference type="EMDB" id="EMD-13273"/>
<dbReference type="EMDB" id="EMD-13274"/>
<dbReference type="EMDB" id="EMD-13275"/>
<dbReference type="EMDB" id="EMD-13276"/>
<dbReference type="EMDB" id="EMD-13277"/>
<dbReference type="EMDB" id="EMD-13278"/>
<dbReference type="EMDB" id="EMD-13279"/>
<dbReference type="EMDB" id="EMD-13280"/>
<dbReference type="EMDB" id="EMD-13281"/>
<dbReference type="EMDB" id="EMD-13282"/>
<dbReference type="EMDB" id="EMD-13285"/>
<dbReference type="EMDB" id="EMD-13286"/>
<dbReference type="EMDB" id="EMD-13410"/>
<dbReference type="EMDB" id="EMD-13411"/>
<dbReference type="EMDB" id="EMD-13412"/>
<dbReference type="EMDB" id="EMD-13413"/>
<dbReference type="EMDB" id="EMD-13432"/>
<dbReference type="EMDB" id="EMD-13433"/>
<dbReference type="EMDB" id="EMD-13434"/>
<dbReference type="EMDB" id="EMD-13435"/>
<dbReference type="EMDB" id="EMD-13436"/>
<dbReference type="EMDB" id="EMD-13445"/>
<dbReference type="EMDB" id="EMD-13446"/>
<dbReference type="EMDB" id="EMD-13447"/>
<dbReference type="EMDB" id="EMD-13448"/>
<dbReference type="EMDB" id="EMD-13449"/>
<dbReference type="EMDB" id="EMD-13450"/>
<dbReference type="SMR" id="P75133"/>
<dbReference type="IntAct" id="P75133">
    <property type="interactions" value="11"/>
</dbReference>
<dbReference type="STRING" id="272634.MPN_658"/>
<dbReference type="EnsemblBacteria" id="AAB95832">
    <property type="protein sequence ID" value="AAB95832"/>
    <property type="gene ID" value="MPN_658"/>
</dbReference>
<dbReference type="GeneID" id="66608654"/>
<dbReference type="KEGG" id="mpn:MPN_658"/>
<dbReference type="PATRIC" id="fig|272634.6.peg.723"/>
<dbReference type="HOGENOM" id="CLU_103507_2_1_14"/>
<dbReference type="OrthoDB" id="9803541at2"/>
<dbReference type="BioCyc" id="MPNE272634:G1GJ3-1053-MONOMER"/>
<dbReference type="Proteomes" id="UP000000808">
    <property type="component" value="Chromosome"/>
</dbReference>
<dbReference type="GO" id="GO:0022625">
    <property type="term" value="C:cytosolic large ribosomal subunit"/>
    <property type="evidence" value="ECO:0007669"/>
    <property type="project" value="TreeGrafter"/>
</dbReference>
<dbReference type="GO" id="GO:0003735">
    <property type="term" value="F:structural constituent of ribosome"/>
    <property type="evidence" value="ECO:0007669"/>
    <property type="project" value="InterPro"/>
</dbReference>
<dbReference type="GO" id="GO:0006412">
    <property type="term" value="P:translation"/>
    <property type="evidence" value="ECO:0007669"/>
    <property type="project" value="UniProtKB-UniRule"/>
</dbReference>
<dbReference type="Gene3D" id="2.30.30.790">
    <property type="match status" value="1"/>
</dbReference>
<dbReference type="HAMAP" id="MF_00402">
    <property type="entry name" value="Ribosomal_bL19"/>
    <property type="match status" value="1"/>
</dbReference>
<dbReference type="InterPro" id="IPR001857">
    <property type="entry name" value="Ribosomal_bL19"/>
</dbReference>
<dbReference type="InterPro" id="IPR018257">
    <property type="entry name" value="Ribosomal_bL19_CS"/>
</dbReference>
<dbReference type="InterPro" id="IPR038657">
    <property type="entry name" value="Ribosomal_bL19_sf"/>
</dbReference>
<dbReference type="InterPro" id="IPR008991">
    <property type="entry name" value="Translation_prot_SH3-like_sf"/>
</dbReference>
<dbReference type="NCBIfam" id="TIGR01024">
    <property type="entry name" value="rplS_bact"/>
    <property type="match status" value="1"/>
</dbReference>
<dbReference type="PANTHER" id="PTHR15680:SF9">
    <property type="entry name" value="LARGE RIBOSOMAL SUBUNIT PROTEIN BL19M"/>
    <property type="match status" value="1"/>
</dbReference>
<dbReference type="PANTHER" id="PTHR15680">
    <property type="entry name" value="RIBOSOMAL PROTEIN L19"/>
    <property type="match status" value="1"/>
</dbReference>
<dbReference type="Pfam" id="PF01245">
    <property type="entry name" value="Ribosomal_L19"/>
    <property type="match status" value="1"/>
</dbReference>
<dbReference type="PIRSF" id="PIRSF002191">
    <property type="entry name" value="Ribosomal_L19"/>
    <property type="match status" value="1"/>
</dbReference>
<dbReference type="PRINTS" id="PR00061">
    <property type="entry name" value="RIBOSOMALL19"/>
</dbReference>
<dbReference type="SUPFAM" id="SSF50104">
    <property type="entry name" value="Translation proteins SH3-like domain"/>
    <property type="match status" value="1"/>
</dbReference>
<dbReference type="PROSITE" id="PS01015">
    <property type="entry name" value="RIBOSOMAL_L19"/>
    <property type="match status" value="1"/>
</dbReference>
<proteinExistence type="evidence at protein level"/>
<reference key="1">
    <citation type="journal article" date="1996" name="Nucleic Acids Res.">
        <title>Complete sequence analysis of the genome of the bacterium Mycoplasma pneumoniae.</title>
        <authorList>
            <person name="Himmelreich R."/>
            <person name="Hilbert H."/>
            <person name="Plagens H."/>
            <person name="Pirkl E."/>
            <person name="Li B.-C."/>
            <person name="Herrmann R."/>
        </authorList>
    </citation>
    <scope>NUCLEOTIDE SEQUENCE [LARGE SCALE GENOMIC DNA]</scope>
    <source>
        <strain>ATCC 29342 / M129 / Subtype 1</strain>
    </source>
</reference>
<accession>P75133</accession>